<reference key="1">
    <citation type="journal article" date="2009" name="BMC Genomics">
        <title>Metabolic analysis of the soil microbe Dechloromonas aromatica str. RCB: indications of a surprisingly complex life-style and cryptic anaerobic pathways for aromatic degradation.</title>
        <authorList>
            <person name="Salinero K.K."/>
            <person name="Keller K."/>
            <person name="Feil W.S."/>
            <person name="Feil H."/>
            <person name="Trong S."/>
            <person name="Di Bartolo G."/>
            <person name="Lapidus A."/>
        </authorList>
    </citation>
    <scope>NUCLEOTIDE SEQUENCE [LARGE SCALE GENOMIC DNA]</scope>
    <source>
        <strain>RCB</strain>
    </source>
</reference>
<dbReference type="EC" id="3.1.21.10" evidence="1"/>
<dbReference type="EMBL" id="CP000089">
    <property type="protein sequence ID" value="AAZ48789.1"/>
    <property type="molecule type" value="Genomic_DNA"/>
</dbReference>
<dbReference type="SMR" id="Q478E2"/>
<dbReference type="STRING" id="159087.Daro_4063"/>
<dbReference type="KEGG" id="dar:Daro_4063"/>
<dbReference type="eggNOG" id="COG0817">
    <property type="taxonomic scope" value="Bacteria"/>
</dbReference>
<dbReference type="HOGENOM" id="CLU_091257_2_0_4"/>
<dbReference type="OrthoDB" id="9805499at2"/>
<dbReference type="GO" id="GO:0005737">
    <property type="term" value="C:cytoplasm"/>
    <property type="evidence" value="ECO:0007669"/>
    <property type="project" value="UniProtKB-SubCell"/>
</dbReference>
<dbReference type="GO" id="GO:0048476">
    <property type="term" value="C:Holliday junction resolvase complex"/>
    <property type="evidence" value="ECO:0007669"/>
    <property type="project" value="UniProtKB-UniRule"/>
</dbReference>
<dbReference type="GO" id="GO:0008821">
    <property type="term" value="F:crossover junction DNA endonuclease activity"/>
    <property type="evidence" value="ECO:0007669"/>
    <property type="project" value="UniProtKB-UniRule"/>
</dbReference>
<dbReference type="GO" id="GO:0003677">
    <property type="term" value="F:DNA binding"/>
    <property type="evidence" value="ECO:0007669"/>
    <property type="project" value="UniProtKB-KW"/>
</dbReference>
<dbReference type="GO" id="GO:0000287">
    <property type="term" value="F:magnesium ion binding"/>
    <property type="evidence" value="ECO:0007669"/>
    <property type="project" value="UniProtKB-UniRule"/>
</dbReference>
<dbReference type="GO" id="GO:0006310">
    <property type="term" value="P:DNA recombination"/>
    <property type="evidence" value="ECO:0007669"/>
    <property type="project" value="UniProtKB-UniRule"/>
</dbReference>
<dbReference type="GO" id="GO:0006281">
    <property type="term" value="P:DNA repair"/>
    <property type="evidence" value="ECO:0007669"/>
    <property type="project" value="UniProtKB-UniRule"/>
</dbReference>
<dbReference type="CDD" id="cd16962">
    <property type="entry name" value="RuvC"/>
    <property type="match status" value="1"/>
</dbReference>
<dbReference type="FunFam" id="3.30.420.10:FF:000002">
    <property type="entry name" value="Crossover junction endodeoxyribonuclease RuvC"/>
    <property type="match status" value="1"/>
</dbReference>
<dbReference type="Gene3D" id="3.30.420.10">
    <property type="entry name" value="Ribonuclease H-like superfamily/Ribonuclease H"/>
    <property type="match status" value="1"/>
</dbReference>
<dbReference type="HAMAP" id="MF_00034">
    <property type="entry name" value="RuvC"/>
    <property type="match status" value="1"/>
</dbReference>
<dbReference type="InterPro" id="IPR012337">
    <property type="entry name" value="RNaseH-like_sf"/>
</dbReference>
<dbReference type="InterPro" id="IPR036397">
    <property type="entry name" value="RNaseH_sf"/>
</dbReference>
<dbReference type="InterPro" id="IPR020563">
    <property type="entry name" value="X-over_junc_endoDNase_Mg_BS"/>
</dbReference>
<dbReference type="InterPro" id="IPR002176">
    <property type="entry name" value="X-over_junc_endoDNase_RuvC"/>
</dbReference>
<dbReference type="NCBIfam" id="TIGR00228">
    <property type="entry name" value="ruvC"/>
    <property type="match status" value="1"/>
</dbReference>
<dbReference type="PANTHER" id="PTHR30194">
    <property type="entry name" value="CROSSOVER JUNCTION ENDODEOXYRIBONUCLEASE RUVC"/>
    <property type="match status" value="1"/>
</dbReference>
<dbReference type="PANTHER" id="PTHR30194:SF3">
    <property type="entry name" value="CROSSOVER JUNCTION ENDODEOXYRIBONUCLEASE RUVC"/>
    <property type="match status" value="1"/>
</dbReference>
<dbReference type="Pfam" id="PF02075">
    <property type="entry name" value="RuvC"/>
    <property type="match status" value="1"/>
</dbReference>
<dbReference type="PRINTS" id="PR00696">
    <property type="entry name" value="RSOLVASERUVC"/>
</dbReference>
<dbReference type="SUPFAM" id="SSF53098">
    <property type="entry name" value="Ribonuclease H-like"/>
    <property type="match status" value="1"/>
</dbReference>
<dbReference type="PROSITE" id="PS01321">
    <property type="entry name" value="RUVC"/>
    <property type="match status" value="1"/>
</dbReference>
<name>RUVC_DECAR</name>
<comment type="function">
    <text evidence="1">The RuvA-RuvB-RuvC complex processes Holliday junction (HJ) DNA during genetic recombination and DNA repair. Endonuclease that resolves HJ intermediates. Cleaves cruciform DNA by making single-stranded nicks across the HJ at symmetrical positions within the homologous arms, yielding a 5'-phosphate and a 3'-hydroxyl group; requires a central core of homology in the junction. The consensus cleavage sequence is 5'-(A/T)TT(C/G)-3'. Cleavage occurs on the 3'-side of the TT dinucleotide at the point of strand exchange. HJ branch migration catalyzed by RuvA-RuvB allows RuvC to scan DNA until it finds its consensus sequence, where it cleaves and resolves the cruciform DNA.</text>
</comment>
<comment type="catalytic activity">
    <reaction evidence="1">
        <text>Endonucleolytic cleavage at a junction such as a reciprocal single-stranded crossover between two homologous DNA duplexes (Holliday junction).</text>
        <dbReference type="EC" id="3.1.21.10"/>
    </reaction>
</comment>
<comment type="cofactor">
    <cofactor evidence="1">
        <name>Mg(2+)</name>
        <dbReference type="ChEBI" id="CHEBI:18420"/>
    </cofactor>
    <text evidence="1">Binds 2 Mg(2+) ion per subunit.</text>
</comment>
<comment type="subunit">
    <text evidence="1">Homodimer which binds Holliday junction (HJ) DNA. The HJ becomes 2-fold symmetrical on binding to RuvC with unstacked arms; it has a different conformation from HJ DNA in complex with RuvA. In the full resolvosome a probable DNA-RuvA(4)-RuvB(12)-RuvC(2) complex forms which resolves the HJ.</text>
</comment>
<comment type="subcellular location">
    <subcellularLocation>
        <location evidence="1">Cytoplasm</location>
    </subcellularLocation>
</comment>
<comment type="similarity">
    <text evidence="1">Belongs to the RuvC family.</text>
</comment>
<keyword id="KW-0963">Cytoplasm</keyword>
<keyword id="KW-0227">DNA damage</keyword>
<keyword id="KW-0233">DNA recombination</keyword>
<keyword id="KW-0234">DNA repair</keyword>
<keyword id="KW-0238">DNA-binding</keyword>
<keyword id="KW-0255">Endonuclease</keyword>
<keyword id="KW-0378">Hydrolase</keyword>
<keyword id="KW-0460">Magnesium</keyword>
<keyword id="KW-0479">Metal-binding</keyword>
<keyword id="KW-0540">Nuclease</keyword>
<sequence length="179" mass="18499">MSITTPRILGIDPGLRVTGFGVIELHGKQLVYVASGCIKSNDKESLPERIKTLFAGISEVIATYQPNQAAVEKVFVNVNPQSTLLLGQARGAAISALVHADLPVAEYTALQTKQAVVGHGKAAKDQVQAMVVRLLNLPGAPTADAADALACAIAHAHGGQGLGAMATAGYRIRGGRLIG</sequence>
<evidence type="ECO:0000255" key="1">
    <source>
        <dbReference type="HAMAP-Rule" id="MF_00034"/>
    </source>
</evidence>
<feature type="chain" id="PRO_0000225136" description="Crossover junction endodeoxyribonuclease RuvC">
    <location>
        <begin position="1"/>
        <end position="179"/>
    </location>
</feature>
<feature type="active site" evidence="1">
    <location>
        <position position="12"/>
    </location>
</feature>
<feature type="active site" evidence="1">
    <location>
        <position position="72"/>
    </location>
</feature>
<feature type="active site" evidence="1">
    <location>
        <position position="144"/>
    </location>
</feature>
<feature type="binding site" evidence="1">
    <location>
        <position position="12"/>
    </location>
    <ligand>
        <name>Mg(2+)</name>
        <dbReference type="ChEBI" id="CHEBI:18420"/>
        <label>1</label>
    </ligand>
</feature>
<feature type="binding site" evidence="1">
    <location>
        <position position="72"/>
    </location>
    <ligand>
        <name>Mg(2+)</name>
        <dbReference type="ChEBI" id="CHEBI:18420"/>
        <label>2</label>
    </ligand>
</feature>
<feature type="binding site" evidence="1">
    <location>
        <position position="144"/>
    </location>
    <ligand>
        <name>Mg(2+)</name>
        <dbReference type="ChEBI" id="CHEBI:18420"/>
        <label>1</label>
    </ligand>
</feature>
<accession>Q478E2</accession>
<proteinExistence type="inferred from homology"/>
<gene>
    <name evidence="1" type="primary">ruvC</name>
    <name type="ordered locus">Daro_4063</name>
</gene>
<protein>
    <recommendedName>
        <fullName evidence="1">Crossover junction endodeoxyribonuclease RuvC</fullName>
        <ecNumber evidence="1">3.1.21.10</ecNumber>
    </recommendedName>
    <alternativeName>
        <fullName evidence="1">Holliday junction nuclease RuvC</fullName>
    </alternativeName>
    <alternativeName>
        <fullName evidence="1">Holliday junction resolvase RuvC</fullName>
    </alternativeName>
</protein>
<organism>
    <name type="scientific">Dechloromonas aromatica (strain RCB)</name>
    <dbReference type="NCBI Taxonomy" id="159087"/>
    <lineage>
        <taxon>Bacteria</taxon>
        <taxon>Pseudomonadati</taxon>
        <taxon>Pseudomonadota</taxon>
        <taxon>Betaproteobacteria</taxon>
        <taxon>Rhodocyclales</taxon>
        <taxon>Azonexaceae</taxon>
        <taxon>Dechloromonas</taxon>
    </lineage>
</organism>